<reference key="1">
    <citation type="journal article" date="1997" name="Science">
        <title>The complete genome sequence of Escherichia coli K-12.</title>
        <authorList>
            <person name="Blattner F.R."/>
            <person name="Plunkett G. III"/>
            <person name="Bloch C.A."/>
            <person name="Perna N.T."/>
            <person name="Burland V."/>
            <person name="Riley M."/>
            <person name="Collado-Vides J."/>
            <person name="Glasner J.D."/>
            <person name="Rode C.K."/>
            <person name="Mayhew G.F."/>
            <person name="Gregor J."/>
            <person name="Davis N.W."/>
            <person name="Kirkpatrick H.A."/>
            <person name="Goeden M.A."/>
            <person name="Rose D.J."/>
            <person name="Mau B."/>
            <person name="Shao Y."/>
        </authorList>
    </citation>
    <scope>NUCLEOTIDE SEQUENCE [LARGE SCALE GENOMIC DNA]</scope>
    <source>
        <strain>K12 / MG1655 / ATCC 47076</strain>
    </source>
</reference>
<reference key="2">
    <citation type="journal article" date="2006" name="Mol. Syst. Biol.">
        <title>Highly accurate genome sequences of Escherichia coli K-12 strains MG1655 and W3110.</title>
        <authorList>
            <person name="Hayashi K."/>
            <person name="Morooka N."/>
            <person name="Yamamoto Y."/>
            <person name="Fujita K."/>
            <person name="Isono K."/>
            <person name="Choi S."/>
            <person name="Ohtsubo E."/>
            <person name="Baba T."/>
            <person name="Wanner B.L."/>
            <person name="Mori H."/>
            <person name="Horiuchi T."/>
        </authorList>
    </citation>
    <scope>NUCLEOTIDE SEQUENCE [LARGE SCALE GENOMIC DNA]</scope>
    <source>
        <strain>K12 / W3110 / ATCC 27325 / DSM 5911</strain>
    </source>
</reference>
<reference key="3">
    <citation type="journal article" date="2006" name="Mol. Microbiol.">
        <title>Cyclic-di-GMP-mediated signalling within the sigma network of Escherichia coli.</title>
        <authorList>
            <person name="Weber H."/>
            <person name="Pesavento C."/>
            <person name="Possling A."/>
            <person name="Tischendorf G."/>
            <person name="Hengge R."/>
        </authorList>
    </citation>
    <scope>INDUCTION</scope>
    <scope>RPOS-DEPENDENCE</scope>
    <source>
        <strain>K12 / MC4100</strain>
    </source>
</reference>
<reference key="4">
    <citation type="journal article" date="2008" name="Cell Res.">
        <title>An EAL domain protein and cyclic AMP contribute to the interaction between the two quorum sensing systems in Escherichia coli.</title>
        <authorList>
            <person name="Zhou X."/>
            <person name="Meng X."/>
            <person name="Sun B."/>
        </authorList>
    </citation>
    <scope>INDUCTION BY AI-1 IN AN SDIA-DEPENDENT FASHION</scope>
    <scope>REPRESSION BY GLUCOSE</scope>
    <scope>DISRUPTION PHENOTYPE</scope>
    <source>
        <strain>K12 / W3110 / ZK126</strain>
    </source>
</reference>
<reference key="5">
    <citation type="journal article" date="2012" name="Microbiology">
        <title>Functional and expressional analyses of the anti-FlhD4C2 factor gene ydiV in Escherichia coli.</title>
        <authorList>
            <person name="Wada T."/>
            <person name="Hatamoto Y."/>
            <person name="Kutsukake K."/>
        </authorList>
    </citation>
    <scope>POSSIBLE FUNCTION</scope>
    <scope>INTERACTION WITH FLHC(2)FLHD(4)</scope>
    <scope>INDUCTION</scope>
    <scope>DISRUPTION PHENOTYPE</scope>
    <source>
        <strain>K12 / MC4100 / ATCC 35695 / DSM 6574</strain>
    </source>
</reference>
<accession>P76204</accession>
<accession>Q2MB51</accession>
<keyword id="KW-0002">3D-structure</keyword>
<keyword id="KW-1185">Reference proteome</keyword>
<keyword id="KW-0678">Repressor</keyword>
<keyword id="KW-0804">Transcription</keyword>
<keyword id="KW-0805">Transcription regulation</keyword>
<sequence>MKIFLENLYHSDCYFLPIRDNQQVLVGVELITHFSSEDGTVRIPTSRVIAQLTEEQHWQLFSEQLELLKSCQHFFIQHKLFAWLNLTPQVATLLLERDNYAGELLKYPFIELLINENYPHLNEGKDNRGLLSLSQVYPLVLGNLGAGNSTMKAVFDGLFTRVMLDKSFIQQQITHRSFEPFIRAIQAQISPCCNCIIAGGIDTAEILAQITPFDFHALQGCLWPAVPINQITTLVQR</sequence>
<protein>
    <recommendedName>
        <fullName>Putative anti-FlhC(2)FlhD(4) factor YdiV</fullName>
    </recommendedName>
    <alternativeName>
        <fullName>c-di-GMP regulator CdgR</fullName>
    </alternativeName>
</protein>
<dbReference type="EMBL" id="U00096">
    <property type="protein sequence ID" value="AAC74777.1"/>
    <property type="molecule type" value="Genomic_DNA"/>
</dbReference>
<dbReference type="EMBL" id="AP009048">
    <property type="protein sequence ID" value="BAE76505.1"/>
    <property type="molecule type" value="Genomic_DNA"/>
</dbReference>
<dbReference type="PIR" id="C64929">
    <property type="entry name" value="C64929"/>
</dbReference>
<dbReference type="RefSeq" id="NP_416222.1">
    <property type="nucleotide sequence ID" value="NC_000913.3"/>
</dbReference>
<dbReference type="RefSeq" id="WP_001300634.1">
    <property type="nucleotide sequence ID" value="NZ_STEB01000009.1"/>
</dbReference>
<dbReference type="PDB" id="3TLQ">
    <property type="method" value="X-ray"/>
    <property type="resolution" value="1.91 A"/>
    <property type="chains" value="A/B=1-237"/>
</dbReference>
<dbReference type="PDB" id="4ES4">
    <property type="method" value="X-ray"/>
    <property type="resolution" value="2.90 A"/>
    <property type="chains" value="A/C/E/G=1-237"/>
</dbReference>
<dbReference type="PDBsum" id="3TLQ"/>
<dbReference type="PDBsum" id="4ES4"/>
<dbReference type="SMR" id="P76204"/>
<dbReference type="BioGRID" id="4260299">
    <property type="interactions" value="14"/>
</dbReference>
<dbReference type="DIP" id="DIP-11763N"/>
<dbReference type="FunCoup" id="P76204">
    <property type="interactions" value="15"/>
</dbReference>
<dbReference type="IntAct" id="P76204">
    <property type="interactions" value="5"/>
</dbReference>
<dbReference type="STRING" id="511145.b1707"/>
<dbReference type="PaxDb" id="511145-b1707"/>
<dbReference type="EnsemblBacteria" id="AAC74777">
    <property type="protein sequence ID" value="AAC74777"/>
    <property type="gene ID" value="b1707"/>
</dbReference>
<dbReference type="GeneID" id="93775870"/>
<dbReference type="GeneID" id="946217"/>
<dbReference type="KEGG" id="ecj:JW1697"/>
<dbReference type="KEGG" id="eco:b1707"/>
<dbReference type="KEGG" id="ecoc:C3026_09775"/>
<dbReference type="PATRIC" id="fig|1411691.4.peg.550"/>
<dbReference type="EchoBASE" id="EB3738"/>
<dbReference type="eggNOG" id="COG2200">
    <property type="taxonomic scope" value="Bacteria"/>
</dbReference>
<dbReference type="HOGENOM" id="CLU_089254_1_1_6"/>
<dbReference type="InParanoid" id="P76204"/>
<dbReference type="OMA" id="LSFEPFM"/>
<dbReference type="OrthoDB" id="8552213at2"/>
<dbReference type="PhylomeDB" id="P76204"/>
<dbReference type="BioCyc" id="EcoCyc:G6925-MONOMER"/>
<dbReference type="EvolutionaryTrace" id="P76204"/>
<dbReference type="PRO" id="PR:P76204"/>
<dbReference type="Proteomes" id="UP000000625">
    <property type="component" value="Chromosome"/>
</dbReference>
<dbReference type="GO" id="GO:0005886">
    <property type="term" value="C:plasma membrane"/>
    <property type="evidence" value="ECO:0000318"/>
    <property type="project" value="GO_Central"/>
</dbReference>
<dbReference type="GO" id="GO:0071111">
    <property type="term" value="F:cyclic-guanylate-specific phosphodiesterase activity"/>
    <property type="evidence" value="ECO:0000318"/>
    <property type="project" value="GO_Central"/>
</dbReference>
<dbReference type="GO" id="GO:1902201">
    <property type="term" value="P:negative regulation of bacterial-type flagellum-dependent cell motility"/>
    <property type="evidence" value="ECO:0000315"/>
    <property type="project" value="EcoCyc"/>
</dbReference>
<dbReference type="GO" id="GO:1900190">
    <property type="term" value="P:regulation of single-species biofilm formation"/>
    <property type="evidence" value="ECO:0000318"/>
    <property type="project" value="GO_Central"/>
</dbReference>
<dbReference type="FunFam" id="3.20.20.450:FF:000005">
    <property type="entry name" value="Cyclic di-GMP regulator CdgR"/>
    <property type="match status" value="1"/>
</dbReference>
<dbReference type="Gene3D" id="3.20.20.450">
    <property type="entry name" value="EAL domain"/>
    <property type="match status" value="1"/>
</dbReference>
<dbReference type="InterPro" id="IPR050706">
    <property type="entry name" value="Cyclic-di-GMP_PDE-like"/>
</dbReference>
<dbReference type="InterPro" id="IPR001633">
    <property type="entry name" value="EAL_dom"/>
</dbReference>
<dbReference type="InterPro" id="IPR035919">
    <property type="entry name" value="EAL_sf"/>
</dbReference>
<dbReference type="PANTHER" id="PTHR33121:SF69">
    <property type="entry name" value="ANTI-FLHC(2)FLHD(4) FACTOR YDIV-RELATED"/>
    <property type="match status" value="1"/>
</dbReference>
<dbReference type="PANTHER" id="PTHR33121">
    <property type="entry name" value="CYCLIC DI-GMP PHOSPHODIESTERASE PDEF"/>
    <property type="match status" value="1"/>
</dbReference>
<dbReference type="Pfam" id="PF00563">
    <property type="entry name" value="EAL"/>
    <property type="match status" value="1"/>
</dbReference>
<dbReference type="SUPFAM" id="SSF141868">
    <property type="entry name" value="EAL domain-like"/>
    <property type="match status" value="1"/>
</dbReference>
<gene>
    <name type="primary">ydiV</name>
    <name type="synonym">cdgR</name>
    <name type="ordered locus">b1707</name>
    <name type="ordered locus">JW1697</name>
</gene>
<proteinExistence type="evidence at protein level"/>
<name>YDIV_ECOLI</name>
<evidence type="ECO:0000269" key="1">
    <source>
    </source>
</evidence>
<evidence type="ECO:0000269" key="2">
    <source>
    </source>
</evidence>
<evidence type="ECO:0000269" key="3">
    <source>
    </source>
</evidence>
<evidence type="ECO:0000305" key="4"/>
<evidence type="ECO:0007829" key="5">
    <source>
        <dbReference type="PDB" id="3TLQ"/>
    </source>
</evidence>
<organism>
    <name type="scientific">Escherichia coli (strain K12)</name>
    <dbReference type="NCBI Taxonomy" id="83333"/>
    <lineage>
        <taxon>Bacteria</taxon>
        <taxon>Pseudomonadati</taxon>
        <taxon>Pseudomonadota</taxon>
        <taxon>Gammaproteobacteria</taxon>
        <taxon>Enterobacterales</taxon>
        <taxon>Enterobacteriaceae</taxon>
        <taxon>Escherichia</taxon>
    </lineage>
</organism>
<comment type="function">
    <text>Upon overexpression acts as a novel anti-FlhC(2)FlhD(4) factor, decreasing its DNA-binding activity, able to negatively regulate expression of flagellar class II operons including FliC.</text>
</comment>
<comment type="induction">
    <text evidence="1 2 3">Induced by extracellular autoinducer AI-1 (Vibrio fischeri autoinducer oxoC6), in an SdiA-dependent fashion. Repressed by glucose. Induced at pH 5.0 in an RpoS-dependent fashion. Very poorly expressed in both rich and nutrient-poor medium due to inefficient translation (at protein level).</text>
</comment>
<comment type="disruption phenotype">
    <text evidence="2 3">A double sdiA/ydiV deletion mutant leads to decreased cAMP levels which inhibits quorum sensing system 2. Repressed by glucose. Unlike the case in Salmonella typhimurium, disruption has no effect on motility or FliC levels.</text>
</comment>
<comment type="similarity">
    <text evidence="4">Belongs to the YdiV family.</text>
</comment>
<feature type="chain" id="PRO_0000168997" description="Putative anti-FlhC(2)FlhD(4) factor YdiV">
    <location>
        <begin position="1"/>
        <end position="237"/>
    </location>
</feature>
<feature type="domain" description="EAL">
    <location>
        <begin position="1"/>
        <end position="237"/>
    </location>
</feature>
<feature type="turn" evidence="5">
    <location>
        <begin position="4"/>
        <end position="8"/>
    </location>
</feature>
<feature type="strand" evidence="5">
    <location>
        <begin position="9"/>
        <end position="19"/>
    </location>
</feature>
<feature type="strand" evidence="5">
    <location>
        <begin position="25"/>
        <end position="36"/>
    </location>
</feature>
<feature type="strand" evidence="5">
    <location>
        <begin position="39"/>
        <end position="43"/>
    </location>
</feature>
<feature type="helix" evidence="5">
    <location>
        <begin position="45"/>
        <end position="51"/>
    </location>
</feature>
<feature type="helix" evidence="5">
    <location>
        <begin position="54"/>
        <end position="70"/>
    </location>
</feature>
<feature type="helix" evidence="5">
    <location>
        <begin position="72"/>
        <end position="77"/>
    </location>
</feature>
<feature type="strand" evidence="5">
    <location>
        <begin position="81"/>
        <end position="85"/>
    </location>
</feature>
<feature type="helix" evidence="5">
    <location>
        <begin position="88"/>
        <end position="96"/>
    </location>
</feature>
<feature type="strand" evidence="5">
    <location>
        <begin position="97"/>
        <end position="101"/>
    </location>
</feature>
<feature type="helix" evidence="5">
    <location>
        <begin position="102"/>
        <end position="105"/>
    </location>
</feature>
<feature type="strand" evidence="5">
    <location>
        <begin position="110"/>
        <end position="114"/>
    </location>
</feature>
<feature type="helix" evidence="5">
    <location>
        <begin position="121"/>
        <end position="126"/>
    </location>
</feature>
<feature type="helix" evidence="5">
    <location>
        <begin position="128"/>
        <end position="136"/>
    </location>
</feature>
<feature type="strand" evidence="5">
    <location>
        <begin position="139"/>
        <end position="144"/>
    </location>
</feature>
<feature type="strand" evidence="5">
    <location>
        <begin position="146"/>
        <end position="149"/>
    </location>
</feature>
<feature type="helix" evidence="5">
    <location>
        <begin position="152"/>
        <end position="155"/>
    </location>
</feature>
<feature type="strand" evidence="5">
    <location>
        <begin position="160"/>
        <end position="164"/>
    </location>
</feature>
<feature type="helix" evidence="5">
    <location>
        <begin position="166"/>
        <end position="174"/>
    </location>
</feature>
<feature type="helix" evidence="5">
    <location>
        <begin position="176"/>
        <end position="178"/>
    </location>
</feature>
<feature type="helix" evidence="5">
    <location>
        <begin position="179"/>
        <end position="189"/>
    </location>
</feature>
<feature type="turn" evidence="5">
    <location>
        <begin position="190"/>
        <end position="192"/>
    </location>
</feature>
<feature type="strand" evidence="5">
    <location>
        <begin position="194"/>
        <end position="198"/>
    </location>
</feature>
<feature type="helix" evidence="5">
    <location>
        <begin position="204"/>
        <end position="210"/>
    </location>
</feature>
<feature type="helix" evidence="5">
    <location>
        <begin position="211"/>
        <end position="213"/>
    </location>
</feature>
<feature type="strand" evidence="5">
    <location>
        <begin position="216"/>
        <end position="218"/>
    </location>
</feature>
<feature type="helix" evidence="5">
    <location>
        <begin position="228"/>
        <end position="234"/>
    </location>
</feature>